<accession>C3MFM4</accession>
<keyword id="KW-0963">Cytoplasm</keyword>
<keyword id="KW-0378">Hydrolase</keyword>
<keyword id="KW-1185">Reference proteome</keyword>
<keyword id="KW-0694">RNA-binding</keyword>
<keyword id="KW-0820">tRNA-binding</keyword>
<dbReference type="EC" id="3.1.1.29" evidence="1"/>
<dbReference type="EMBL" id="CP001389">
    <property type="protein sequence ID" value="ACP26081.1"/>
    <property type="molecule type" value="Genomic_DNA"/>
</dbReference>
<dbReference type="RefSeq" id="WP_012708839.1">
    <property type="nucleotide sequence ID" value="NC_012587.1"/>
</dbReference>
<dbReference type="RefSeq" id="YP_002826834.1">
    <property type="nucleotide sequence ID" value="NC_012587.1"/>
</dbReference>
<dbReference type="SMR" id="C3MFM4"/>
<dbReference type="STRING" id="394.NGR_c23220"/>
<dbReference type="KEGG" id="rhi:NGR_c23220"/>
<dbReference type="PATRIC" id="fig|394.7.peg.5140"/>
<dbReference type="eggNOG" id="COG0193">
    <property type="taxonomic scope" value="Bacteria"/>
</dbReference>
<dbReference type="HOGENOM" id="CLU_062456_1_1_5"/>
<dbReference type="OrthoDB" id="9800507at2"/>
<dbReference type="Proteomes" id="UP000001054">
    <property type="component" value="Chromosome"/>
</dbReference>
<dbReference type="GO" id="GO:0005737">
    <property type="term" value="C:cytoplasm"/>
    <property type="evidence" value="ECO:0007669"/>
    <property type="project" value="UniProtKB-SubCell"/>
</dbReference>
<dbReference type="GO" id="GO:0004045">
    <property type="term" value="F:peptidyl-tRNA hydrolase activity"/>
    <property type="evidence" value="ECO:0007669"/>
    <property type="project" value="UniProtKB-UniRule"/>
</dbReference>
<dbReference type="GO" id="GO:0000049">
    <property type="term" value="F:tRNA binding"/>
    <property type="evidence" value="ECO:0007669"/>
    <property type="project" value="UniProtKB-UniRule"/>
</dbReference>
<dbReference type="GO" id="GO:0006515">
    <property type="term" value="P:protein quality control for misfolded or incompletely synthesized proteins"/>
    <property type="evidence" value="ECO:0007669"/>
    <property type="project" value="UniProtKB-UniRule"/>
</dbReference>
<dbReference type="GO" id="GO:0072344">
    <property type="term" value="P:rescue of stalled ribosome"/>
    <property type="evidence" value="ECO:0007669"/>
    <property type="project" value="UniProtKB-UniRule"/>
</dbReference>
<dbReference type="CDD" id="cd00462">
    <property type="entry name" value="PTH"/>
    <property type="match status" value="1"/>
</dbReference>
<dbReference type="FunFam" id="3.40.50.1470:FF:000001">
    <property type="entry name" value="Peptidyl-tRNA hydrolase"/>
    <property type="match status" value="1"/>
</dbReference>
<dbReference type="Gene3D" id="3.40.50.1470">
    <property type="entry name" value="Peptidyl-tRNA hydrolase"/>
    <property type="match status" value="1"/>
</dbReference>
<dbReference type="HAMAP" id="MF_00083">
    <property type="entry name" value="Pept_tRNA_hydro_bact"/>
    <property type="match status" value="1"/>
</dbReference>
<dbReference type="InterPro" id="IPR001328">
    <property type="entry name" value="Pept_tRNA_hydro"/>
</dbReference>
<dbReference type="InterPro" id="IPR018171">
    <property type="entry name" value="Pept_tRNA_hydro_CS"/>
</dbReference>
<dbReference type="InterPro" id="IPR036416">
    <property type="entry name" value="Pept_tRNA_hydro_sf"/>
</dbReference>
<dbReference type="NCBIfam" id="TIGR00447">
    <property type="entry name" value="pth"/>
    <property type="match status" value="1"/>
</dbReference>
<dbReference type="PANTHER" id="PTHR17224">
    <property type="entry name" value="PEPTIDYL-TRNA HYDROLASE"/>
    <property type="match status" value="1"/>
</dbReference>
<dbReference type="PANTHER" id="PTHR17224:SF1">
    <property type="entry name" value="PEPTIDYL-TRNA HYDROLASE"/>
    <property type="match status" value="1"/>
</dbReference>
<dbReference type="Pfam" id="PF01195">
    <property type="entry name" value="Pept_tRNA_hydro"/>
    <property type="match status" value="1"/>
</dbReference>
<dbReference type="SUPFAM" id="SSF53178">
    <property type="entry name" value="Peptidyl-tRNA hydrolase-like"/>
    <property type="match status" value="1"/>
</dbReference>
<dbReference type="PROSITE" id="PS01195">
    <property type="entry name" value="PEPT_TRNA_HYDROL_1"/>
    <property type="match status" value="1"/>
</dbReference>
<dbReference type="PROSITE" id="PS01196">
    <property type="entry name" value="PEPT_TRNA_HYDROL_2"/>
    <property type="match status" value="1"/>
</dbReference>
<name>PTH_SINFN</name>
<evidence type="ECO:0000255" key="1">
    <source>
        <dbReference type="HAMAP-Rule" id="MF_00083"/>
    </source>
</evidence>
<evidence type="ECO:0000256" key="2">
    <source>
        <dbReference type="SAM" id="MobiDB-lite"/>
    </source>
</evidence>
<organism>
    <name type="scientific">Sinorhizobium fredii (strain NBRC 101917 / NGR234)</name>
    <dbReference type="NCBI Taxonomy" id="394"/>
    <lineage>
        <taxon>Bacteria</taxon>
        <taxon>Pseudomonadati</taxon>
        <taxon>Pseudomonadota</taxon>
        <taxon>Alphaproteobacteria</taxon>
        <taxon>Hyphomicrobiales</taxon>
        <taxon>Rhizobiaceae</taxon>
        <taxon>Sinorhizobium/Ensifer group</taxon>
        <taxon>Sinorhizobium</taxon>
    </lineage>
</organism>
<feature type="chain" id="PRO_1000118404" description="Peptidyl-tRNA hydrolase">
    <location>
        <begin position="1"/>
        <end position="239"/>
    </location>
</feature>
<feature type="region of interest" description="Disordered" evidence="2">
    <location>
        <begin position="188"/>
        <end position="225"/>
    </location>
</feature>
<feature type="active site" description="Proton acceptor" evidence="1">
    <location>
        <position position="19"/>
    </location>
</feature>
<feature type="binding site" evidence="1">
    <location>
        <position position="14"/>
    </location>
    <ligand>
        <name>tRNA</name>
        <dbReference type="ChEBI" id="CHEBI:17843"/>
    </ligand>
</feature>
<feature type="binding site" evidence="1">
    <location>
        <position position="64"/>
    </location>
    <ligand>
        <name>tRNA</name>
        <dbReference type="ChEBI" id="CHEBI:17843"/>
    </ligand>
</feature>
<feature type="binding site" evidence="1">
    <location>
        <position position="66"/>
    </location>
    <ligand>
        <name>tRNA</name>
        <dbReference type="ChEBI" id="CHEBI:17843"/>
    </ligand>
</feature>
<feature type="binding site" evidence="1">
    <location>
        <position position="112"/>
    </location>
    <ligand>
        <name>tRNA</name>
        <dbReference type="ChEBI" id="CHEBI:17843"/>
    </ligand>
</feature>
<feature type="site" description="Discriminates between blocked and unblocked aminoacyl-tRNA" evidence="1">
    <location>
        <position position="9"/>
    </location>
</feature>
<feature type="site" description="Stabilizes the basic form of H active site to accept a proton" evidence="1">
    <location>
        <position position="91"/>
    </location>
</feature>
<comment type="function">
    <text evidence="1">Hydrolyzes ribosome-free peptidyl-tRNAs (with 1 or more amino acids incorporated), which drop off the ribosome during protein synthesis, or as a result of ribosome stalling.</text>
</comment>
<comment type="function">
    <text evidence="1">Catalyzes the release of premature peptidyl moieties from peptidyl-tRNA molecules trapped in stalled 50S ribosomal subunits, and thus maintains levels of free tRNAs and 50S ribosomes.</text>
</comment>
<comment type="catalytic activity">
    <reaction evidence="1">
        <text>an N-acyl-L-alpha-aminoacyl-tRNA + H2O = an N-acyl-L-amino acid + a tRNA + H(+)</text>
        <dbReference type="Rhea" id="RHEA:54448"/>
        <dbReference type="Rhea" id="RHEA-COMP:10123"/>
        <dbReference type="Rhea" id="RHEA-COMP:13883"/>
        <dbReference type="ChEBI" id="CHEBI:15377"/>
        <dbReference type="ChEBI" id="CHEBI:15378"/>
        <dbReference type="ChEBI" id="CHEBI:59874"/>
        <dbReference type="ChEBI" id="CHEBI:78442"/>
        <dbReference type="ChEBI" id="CHEBI:138191"/>
        <dbReference type="EC" id="3.1.1.29"/>
    </reaction>
</comment>
<comment type="subunit">
    <text evidence="1">Monomer.</text>
</comment>
<comment type="subcellular location">
    <subcellularLocation>
        <location evidence="1">Cytoplasm</location>
    </subcellularLocation>
</comment>
<comment type="similarity">
    <text evidence="1">Belongs to the PTH family.</text>
</comment>
<reference key="1">
    <citation type="journal article" date="2009" name="Appl. Environ. Microbiol.">
        <title>Rhizobium sp. strain NGR234 possesses a remarkable number of secretion systems.</title>
        <authorList>
            <person name="Schmeisser C."/>
            <person name="Liesegang H."/>
            <person name="Krysciak D."/>
            <person name="Bakkou N."/>
            <person name="Le Quere A."/>
            <person name="Wollherr A."/>
            <person name="Heinemeyer I."/>
            <person name="Morgenstern B."/>
            <person name="Pommerening-Roeser A."/>
            <person name="Flores M."/>
            <person name="Palacios R."/>
            <person name="Brenner S."/>
            <person name="Gottschalk G."/>
            <person name="Schmitz R.A."/>
            <person name="Broughton W.J."/>
            <person name="Perret X."/>
            <person name="Strittmatter A.W."/>
            <person name="Streit W.R."/>
        </authorList>
    </citation>
    <scope>NUCLEOTIDE SEQUENCE [LARGE SCALE GENOMIC DNA]</scope>
    <source>
        <strain>NBRC 101917 / NGR234</strain>
    </source>
</reference>
<sequence>MLIIAGLGNPGSKYAGNRHNIGFMAVDAIWQRQGFSSWSKKFKAEIAEGEIAGERVLLIKPQTFMNLSGEAVGEAMRFYKLAPKDIVVIYDELDLIAGKARIKIGGGHGGHNGIKSIDAHCGKEYRRLRLGIGHPGVKDLVHAHVLGDFAKADQAWLSSLLDTIADNAGMLVKGEDSQLMNKIALATGGKPDAEEPQAPKKQVGQSHIHKARNAAQPKKLPATGPMADMLKKMFGSKGD</sequence>
<gene>
    <name evidence="1" type="primary">pth</name>
    <name type="ordered locus">NGR_c23220</name>
</gene>
<protein>
    <recommendedName>
        <fullName evidence="1">Peptidyl-tRNA hydrolase</fullName>
        <shortName evidence="1">Pth</shortName>
        <ecNumber evidence="1">3.1.1.29</ecNumber>
    </recommendedName>
</protein>
<proteinExistence type="inferred from homology"/>